<sequence>MSATPRVRVLEIFASLQGEGINLGRPAVFVRLAGCPIRCIYCDTKYSWDFNAGVEMGVEEIVAKALALSVVGHVVVTGGEPLIWQRRGLEELACALRALGSVEVETSGAYPPTPELDRCVDFYDVSPKLSNAGVKAPFSPFYASSPKAWFKFVVSNADDVEEVERFVVAYGIPRGRVFLMPMAESPEEHGEALRRIWDAAVRGGFRVTPRLHIMAWGNARGK</sequence>
<protein>
    <recommendedName>
        <fullName evidence="1">7-carboxy-7-deazaguanine synthase</fullName>
        <shortName evidence="1">CDG synthase</shortName>
        <ecNumber evidence="1">4.3.99.3</ecNumber>
    </recommendedName>
    <alternativeName>
        <fullName evidence="1">Archaeosine biosynthesis protein QueE</fullName>
    </alternativeName>
</protein>
<dbReference type="EC" id="4.3.99.3" evidence="1"/>
<dbReference type="EMBL" id="AE009441">
    <property type="protein sequence ID" value="AAL62499.1"/>
    <property type="molecule type" value="Genomic_DNA"/>
</dbReference>
<dbReference type="RefSeq" id="WP_011006971.1">
    <property type="nucleotide sequence ID" value="NC_003364.1"/>
</dbReference>
<dbReference type="SMR" id="Q8ZZZ0"/>
<dbReference type="STRING" id="178306.PAE0010"/>
<dbReference type="EnsemblBacteria" id="AAL62499">
    <property type="protein sequence ID" value="AAL62499"/>
    <property type="gene ID" value="PAE0010"/>
</dbReference>
<dbReference type="GeneID" id="1464713"/>
<dbReference type="KEGG" id="pai:PAE0010"/>
<dbReference type="PATRIC" id="fig|178306.9.peg.8"/>
<dbReference type="eggNOG" id="arCOG02173">
    <property type="taxonomic scope" value="Archaea"/>
</dbReference>
<dbReference type="HOGENOM" id="CLU_066739_2_4_2"/>
<dbReference type="InParanoid" id="Q8ZZZ0"/>
<dbReference type="UniPathway" id="UPA00391"/>
<dbReference type="Proteomes" id="UP000002439">
    <property type="component" value="Chromosome"/>
</dbReference>
<dbReference type="GO" id="GO:0051539">
    <property type="term" value="F:4 iron, 4 sulfur cluster binding"/>
    <property type="evidence" value="ECO:0007669"/>
    <property type="project" value="UniProtKB-UniRule"/>
</dbReference>
<dbReference type="GO" id="GO:0016840">
    <property type="term" value="F:carbon-nitrogen lyase activity"/>
    <property type="evidence" value="ECO:0007669"/>
    <property type="project" value="UniProtKB-UniRule"/>
</dbReference>
<dbReference type="GO" id="GO:0000287">
    <property type="term" value="F:magnesium ion binding"/>
    <property type="evidence" value="ECO:0007669"/>
    <property type="project" value="UniProtKB-UniRule"/>
</dbReference>
<dbReference type="GO" id="GO:1904047">
    <property type="term" value="F:S-adenosyl-L-methionine binding"/>
    <property type="evidence" value="ECO:0007669"/>
    <property type="project" value="UniProtKB-UniRule"/>
</dbReference>
<dbReference type="Gene3D" id="3.20.20.70">
    <property type="entry name" value="Aldolase class I"/>
    <property type="match status" value="1"/>
</dbReference>
<dbReference type="HAMAP" id="MF_00917">
    <property type="entry name" value="QueE"/>
    <property type="match status" value="1"/>
</dbReference>
<dbReference type="InterPro" id="IPR024924">
    <property type="entry name" value="7-CO-7-deazaguanine_synth-like"/>
</dbReference>
<dbReference type="InterPro" id="IPR013785">
    <property type="entry name" value="Aldolase_TIM"/>
</dbReference>
<dbReference type="InterPro" id="IPR007197">
    <property type="entry name" value="rSAM"/>
</dbReference>
<dbReference type="PANTHER" id="PTHR42836">
    <property type="entry name" value="7-CARBOXY-7-DEAZAGUANINE SYNTHASE"/>
    <property type="match status" value="1"/>
</dbReference>
<dbReference type="PANTHER" id="PTHR42836:SF1">
    <property type="entry name" value="7-CARBOXY-7-DEAZAGUANINE SYNTHASE"/>
    <property type="match status" value="1"/>
</dbReference>
<dbReference type="Pfam" id="PF13353">
    <property type="entry name" value="Fer4_12"/>
    <property type="match status" value="1"/>
</dbReference>
<dbReference type="Pfam" id="PF04055">
    <property type="entry name" value="Radical_SAM"/>
    <property type="match status" value="1"/>
</dbReference>
<dbReference type="PIRSF" id="PIRSF000370">
    <property type="entry name" value="QueE"/>
    <property type="match status" value="1"/>
</dbReference>
<dbReference type="SFLD" id="SFLDS00029">
    <property type="entry name" value="Radical_SAM"/>
    <property type="match status" value="1"/>
</dbReference>
<dbReference type="SUPFAM" id="SSF102114">
    <property type="entry name" value="Radical SAM enzymes"/>
    <property type="match status" value="1"/>
</dbReference>
<dbReference type="PROSITE" id="PS51918">
    <property type="entry name" value="RADICAL_SAM"/>
    <property type="match status" value="1"/>
</dbReference>
<organism>
    <name type="scientific">Pyrobaculum aerophilum (strain ATCC 51768 / DSM 7523 / JCM 9630 / CIP 104966 / NBRC 100827 / IM2)</name>
    <dbReference type="NCBI Taxonomy" id="178306"/>
    <lineage>
        <taxon>Archaea</taxon>
        <taxon>Thermoproteota</taxon>
        <taxon>Thermoprotei</taxon>
        <taxon>Thermoproteales</taxon>
        <taxon>Thermoproteaceae</taxon>
        <taxon>Pyrobaculum</taxon>
    </lineage>
</organism>
<reference key="1">
    <citation type="journal article" date="2002" name="Proc. Natl. Acad. Sci. U.S.A.">
        <title>Genome sequence of the hyperthermophilic crenarchaeon Pyrobaculum aerophilum.</title>
        <authorList>
            <person name="Fitz-Gibbon S.T."/>
            <person name="Ladner H."/>
            <person name="Kim U.-J."/>
            <person name="Stetter K.O."/>
            <person name="Simon M.I."/>
            <person name="Miller J.H."/>
        </authorList>
    </citation>
    <scope>NUCLEOTIDE SEQUENCE [LARGE SCALE GENOMIC DNA]</scope>
    <source>
        <strain>ATCC 51768 / DSM 7523 / JCM 9630 / CIP 104966 / NBRC 100827 / IM2</strain>
    </source>
</reference>
<name>QUEE_PYRAE</name>
<evidence type="ECO:0000255" key="1">
    <source>
        <dbReference type="HAMAP-Rule" id="MF_00917"/>
    </source>
</evidence>
<evidence type="ECO:0000255" key="2">
    <source>
        <dbReference type="PROSITE-ProRule" id="PRU01266"/>
    </source>
</evidence>
<keyword id="KW-0004">4Fe-4S</keyword>
<keyword id="KW-0408">Iron</keyword>
<keyword id="KW-0411">Iron-sulfur</keyword>
<keyword id="KW-0456">Lyase</keyword>
<keyword id="KW-0460">Magnesium</keyword>
<keyword id="KW-0479">Metal-binding</keyword>
<keyword id="KW-1185">Reference proteome</keyword>
<keyword id="KW-0949">S-adenosyl-L-methionine</keyword>
<proteinExistence type="inferred from homology"/>
<accession>Q8ZZZ0</accession>
<feature type="chain" id="PRO_0000416221" description="7-carboxy-7-deazaguanine synthase">
    <location>
        <begin position="1"/>
        <end position="222"/>
    </location>
</feature>
<feature type="domain" description="Radical SAM core" evidence="2">
    <location>
        <begin position="22"/>
        <end position="222"/>
    </location>
</feature>
<feature type="binding site" evidence="1">
    <location>
        <begin position="16"/>
        <end position="18"/>
    </location>
    <ligand>
        <name>substrate</name>
    </ligand>
</feature>
<feature type="binding site" evidence="1">
    <location>
        <position position="31"/>
    </location>
    <ligand>
        <name>substrate</name>
    </ligand>
</feature>
<feature type="binding site" evidence="1">
    <location>
        <position position="35"/>
    </location>
    <ligand>
        <name>[4Fe-4S] cluster</name>
        <dbReference type="ChEBI" id="CHEBI:49883"/>
        <note>4Fe-4S-S-AdoMet</note>
    </ligand>
</feature>
<feature type="binding site" evidence="1">
    <location>
        <position position="39"/>
    </location>
    <ligand>
        <name>[4Fe-4S] cluster</name>
        <dbReference type="ChEBI" id="CHEBI:49883"/>
        <note>4Fe-4S-S-AdoMet</note>
    </ligand>
</feature>
<feature type="binding site" evidence="1">
    <location>
        <position position="42"/>
    </location>
    <ligand>
        <name>[4Fe-4S] cluster</name>
        <dbReference type="ChEBI" id="CHEBI:49883"/>
        <note>4Fe-4S-S-AdoMet</note>
    </ligand>
</feature>
<feature type="binding site" evidence="1">
    <location>
        <position position="44"/>
    </location>
    <ligand>
        <name>Mg(2+)</name>
        <dbReference type="ChEBI" id="CHEBI:18420"/>
    </ligand>
</feature>
<feature type="binding site" evidence="1">
    <location>
        <position position="77"/>
    </location>
    <ligand>
        <name>substrate</name>
    </ligand>
</feature>
<feature type="binding site" evidence="1">
    <location>
        <position position="79"/>
    </location>
    <ligand>
        <name>S-adenosyl-L-methionine</name>
        <dbReference type="ChEBI" id="CHEBI:59789"/>
    </ligand>
</feature>
<feature type="binding site" evidence="1">
    <location>
        <begin position="126"/>
        <end position="128"/>
    </location>
    <ligand>
        <name>S-adenosyl-L-methionine</name>
        <dbReference type="ChEBI" id="CHEBI:59789"/>
    </ligand>
</feature>
<gene>
    <name evidence="1" type="primary">queE</name>
    <name type="ordered locus">PAE0010</name>
</gene>
<comment type="function">
    <text evidence="1">Catalyzes the complex heterocyclic radical-mediated conversion of 6-carboxy-5,6,7,8-tetrahydropterin (CPH4) to 7-carboxy-7-deazaguanine (CDG), a step common to the biosynthetic pathways of all 7-deazapurine-containing compounds.</text>
</comment>
<comment type="catalytic activity">
    <reaction evidence="1">
        <text>6-carboxy-5,6,7,8-tetrahydropterin + H(+) = 7-carboxy-7-deazaguanine + NH4(+)</text>
        <dbReference type="Rhea" id="RHEA:27974"/>
        <dbReference type="ChEBI" id="CHEBI:15378"/>
        <dbReference type="ChEBI" id="CHEBI:28938"/>
        <dbReference type="ChEBI" id="CHEBI:61032"/>
        <dbReference type="ChEBI" id="CHEBI:61036"/>
        <dbReference type="EC" id="4.3.99.3"/>
    </reaction>
</comment>
<comment type="cofactor">
    <cofactor evidence="1">
        <name>[4Fe-4S] cluster</name>
        <dbReference type="ChEBI" id="CHEBI:49883"/>
    </cofactor>
    <text evidence="1">Binds 1 [4Fe-4S] cluster. The cluster is coordinated with 3 cysteines and an exchangeable S-adenosyl-L-methionine.</text>
</comment>
<comment type="cofactor">
    <cofactor evidence="1">
        <name>S-adenosyl-L-methionine</name>
        <dbReference type="ChEBI" id="CHEBI:59789"/>
    </cofactor>
    <text evidence="1">Binds 1 S-adenosyl-L-methionine per subunit.</text>
</comment>
<comment type="cofactor">
    <cofactor evidence="1">
        <name>Mg(2+)</name>
        <dbReference type="ChEBI" id="CHEBI:18420"/>
    </cofactor>
</comment>
<comment type="pathway">
    <text evidence="1">Purine metabolism; 7-cyano-7-deazaguanine biosynthesis.</text>
</comment>
<comment type="subunit">
    <text evidence="1">Homodimer.</text>
</comment>
<comment type="similarity">
    <text evidence="1">Belongs to the radical SAM superfamily. 7-carboxy-7-deazaguanine synthase family.</text>
</comment>